<keyword id="KW-1185">Reference proteome</keyword>
<keyword id="KW-0687">Ribonucleoprotein</keyword>
<keyword id="KW-0689">Ribosomal protein</keyword>
<keyword id="KW-0694">RNA-binding</keyword>
<keyword id="KW-0699">rRNA-binding</keyword>
<gene>
    <name evidence="1" type="primary">rplX</name>
    <name type="ordered locus">Tlet_0590</name>
</gene>
<accession>A8F4S2</accession>
<sequence length="105" mass="11838">MRVKKDDLVEVISGKDKGKRGKVLKVLPRENKVVIQGVNIVKRHQRPIPQLREGGIIEREAPIYASKVMLVCPNCDKPTRVGMRFLDDGAKVRFCKKCGEIVDKA</sequence>
<feature type="chain" id="PRO_1000067587" description="Large ribosomal subunit protein uL24">
    <location>
        <begin position="1"/>
        <end position="105"/>
    </location>
</feature>
<evidence type="ECO:0000255" key="1">
    <source>
        <dbReference type="HAMAP-Rule" id="MF_01326"/>
    </source>
</evidence>
<evidence type="ECO:0000305" key="2"/>
<name>RL24_PSELT</name>
<reference key="1">
    <citation type="submission" date="2007-08" db="EMBL/GenBank/DDBJ databases">
        <title>Complete sequence of Thermotoga lettingae TMO.</title>
        <authorList>
            <consortium name="US DOE Joint Genome Institute"/>
            <person name="Copeland A."/>
            <person name="Lucas S."/>
            <person name="Lapidus A."/>
            <person name="Barry K."/>
            <person name="Glavina del Rio T."/>
            <person name="Dalin E."/>
            <person name="Tice H."/>
            <person name="Pitluck S."/>
            <person name="Foster B."/>
            <person name="Bruce D."/>
            <person name="Schmutz J."/>
            <person name="Larimer F."/>
            <person name="Land M."/>
            <person name="Hauser L."/>
            <person name="Kyrpides N."/>
            <person name="Mikhailova N."/>
            <person name="Nelson K."/>
            <person name="Gogarten J.P."/>
            <person name="Noll K."/>
            <person name="Richardson P."/>
        </authorList>
    </citation>
    <scope>NUCLEOTIDE SEQUENCE [LARGE SCALE GENOMIC DNA]</scope>
    <source>
        <strain>ATCC BAA-301 / DSM 14385 / NBRC 107922 / TMO</strain>
    </source>
</reference>
<organism>
    <name type="scientific">Pseudothermotoga lettingae (strain ATCC BAA-301 / DSM 14385 / NBRC 107922 / TMO)</name>
    <name type="common">Thermotoga lettingae</name>
    <dbReference type="NCBI Taxonomy" id="416591"/>
    <lineage>
        <taxon>Bacteria</taxon>
        <taxon>Thermotogati</taxon>
        <taxon>Thermotogota</taxon>
        <taxon>Thermotogae</taxon>
        <taxon>Thermotogales</taxon>
        <taxon>Thermotogaceae</taxon>
        <taxon>Pseudothermotoga</taxon>
    </lineage>
</organism>
<dbReference type="EMBL" id="CP000812">
    <property type="protein sequence ID" value="ABV33156.1"/>
    <property type="molecule type" value="Genomic_DNA"/>
</dbReference>
<dbReference type="RefSeq" id="WP_012002637.1">
    <property type="nucleotide sequence ID" value="NZ_BSDV01000001.1"/>
</dbReference>
<dbReference type="SMR" id="A8F4S2"/>
<dbReference type="STRING" id="416591.Tlet_0590"/>
<dbReference type="KEGG" id="tle:Tlet_0590"/>
<dbReference type="eggNOG" id="COG0198">
    <property type="taxonomic scope" value="Bacteria"/>
</dbReference>
<dbReference type="HOGENOM" id="CLU_093315_2_0_0"/>
<dbReference type="OrthoDB" id="9807419at2"/>
<dbReference type="Proteomes" id="UP000002016">
    <property type="component" value="Chromosome"/>
</dbReference>
<dbReference type="GO" id="GO:1990904">
    <property type="term" value="C:ribonucleoprotein complex"/>
    <property type="evidence" value="ECO:0007669"/>
    <property type="project" value="UniProtKB-KW"/>
</dbReference>
<dbReference type="GO" id="GO:0005840">
    <property type="term" value="C:ribosome"/>
    <property type="evidence" value="ECO:0007669"/>
    <property type="project" value="UniProtKB-KW"/>
</dbReference>
<dbReference type="GO" id="GO:0019843">
    <property type="term" value="F:rRNA binding"/>
    <property type="evidence" value="ECO:0007669"/>
    <property type="project" value="UniProtKB-UniRule"/>
</dbReference>
<dbReference type="GO" id="GO:0003735">
    <property type="term" value="F:structural constituent of ribosome"/>
    <property type="evidence" value="ECO:0007669"/>
    <property type="project" value="InterPro"/>
</dbReference>
<dbReference type="GO" id="GO:0006412">
    <property type="term" value="P:translation"/>
    <property type="evidence" value="ECO:0007669"/>
    <property type="project" value="UniProtKB-UniRule"/>
</dbReference>
<dbReference type="CDD" id="cd06089">
    <property type="entry name" value="KOW_RPL26"/>
    <property type="match status" value="1"/>
</dbReference>
<dbReference type="FunFam" id="2.30.30.30:FF:000004">
    <property type="entry name" value="50S ribosomal protein L24"/>
    <property type="match status" value="1"/>
</dbReference>
<dbReference type="Gene3D" id="2.30.30.30">
    <property type="match status" value="1"/>
</dbReference>
<dbReference type="HAMAP" id="MF_01326_B">
    <property type="entry name" value="Ribosomal_uL24_B"/>
    <property type="match status" value="1"/>
</dbReference>
<dbReference type="InterPro" id="IPR005824">
    <property type="entry name" value="KOW"/>
</dbReference>
<dbReference type="InterPro" id="IPR014722">
    <property type="entry name" value="Rib_uL2_dom2"/>
</dbReference>
<dbReference type="InterPro" id="IPR003256">
    <property type="entry name" value="Ribosomal_uL24"/>
</dbReference>
<dbReference type="InterPro" id="IPR005825">
    <property type="entry name" value="Ribosomal_uL24_CS"/>
</dbReference>
<dbReference type="InterPro" id="IPR041988">
    <property type="entry name" value="Ribosomal_uL24_KOW"/>
</dbReference>
<dbReference type="InterPro" id="IPR008991">
    <property type="entry name" value="Translation_prot_SH3-like_sf"/>
</dbReference>
<dbReference type="NCBIfam" id="TIGR01079">
    <property type="entry name" value="rplX_bact"/>
    <property type="match status" value="1"/>
</dbReference>
<dbReference type="PANTHER" id="PTHR12903">
    <property type="entry name" value="MITOCHONDRIAL RIBOSOMAL PROTEIN L24"/>
    <property type="match status" value="1"/>
</dbReference>
<dbReference type="Pfam" id="PF00467">
    <property type="entry name" value="KOW"/>
    <property type="match status" value="1"/>
</dbReference>
<dbReference type="Pfam" id="PF17136">
    <property type="entry name" value="ribosomal_L24"/>
    <property type="match status" value="1"/>
</dbReference>
<dbReference type="SMART" id="SM00739">
    <property type="entry name" value="KOW"/>
    <property type="match status" value="1"/>
</dbReference>
<dbReference type="SUPFAM" id="SSF50104">
    <property type="entry name" value="Translation proteins SH3-like domain"/>
    <property type="match status" value="1"/>
</dbReference>
<dbReference type="PROSITE" id="PS01108">
    <property type="entry name" value="RIBOSOMAL_L24"/>
    <property type="match status" value="1"/>
</dbReference>
<protein>
    <recommendedName>
        <fullName evidence="1">Large ribosomal subunit protein uL24</fullName>
    </recommendedName>
    <alternativeName>
        <fullName evidence="2">50S ribosomal protein L24</fullName>
    </alternativeName>
</protein>
<comment type="function">
    <text evidence="1">One of two assembly initiator proteins, it binds directly to the 5'-end of the 23S rRNA, where it nucleates assembly of the 50S subunit.</text>
</comment>
<comment type="function">
    <text evidence="1">One of the proteins that surrounds the polypeptide exit tunnel on the outside of the subunit.</text>
</comment>
<comment type="subunit">
    <text evidence="1">Part of the 50S ribosomal subunit.</text>
</comment>
<comment type="similarity">
    <text evidence="1">Belongs to the universal ribosomal protein uL24 family.</text>
</comment>
<proteinExistence type="inferred from homology"/>